<accession>P0DG51</accession>
<accession>Q878H6</accession>
<accession>Q8K821</accession>
<name>SYFA_STRPQ</name>
<organism>
    <name type="scientific">Streptococcus pyogenes serotype M3 (strain SSI-1)</name>
    <dbReference type="NCBI Taxonomy" id="193567"/>
    <lineage>
        <taxon>Bacteria</taxon>
        <taxon>Bacillati</taxon>
        <taxon>Bacillota</taxon>
        <taxon>Bacilli</taxon>
        <taxon>Lactobacillales</taxon>
        <taxon>Streptococcaceae</taxon>
        <taxon>Streptococcus</taxon>
    </lineage>
</organism>
<comment type="catalytic activity">
    <reaction evidence="1">
        <text>tRNA(Phe) + L-phenylalanine + ATP = L-phenylalanyl-tRNA(Phe) + AMP + diphosphate + H(+)</text>
        <dbReference type="Rhea" id="RHEA:19413"/>
        <dbReference type="Rhea" id="RHEA-COMP:9668"/>
        <dbReference type="Rhea" id="RHEA-COMP:9699"/>
        <dbReference type="ChEBI" id="CHEBI:15378"/>
        <dbReference type="ChEBI" id="CHEBI:30616"/>
        <dbReference type="ChEBI" id="CHEBI:33019"/>
        <dbReference type="ChEBI" id="CHEBI:58095"/>
        <dbReference type="ChEBI" id="CHEBI:78442"/>
        <dbReference type="ChEBI" id="CHEBI:78531"/>
        <dbReference type="ChEBI" id="CHEBI:456215"/>
        <dbReference type="EC" id="6.1.1.20"/>
    </reaction>
</comment>
<comment type="cofactor">
    <cofactor evidence="1">
        <name>Mg(2+)</name>
        <dbReference type="ChEBI" id="CHEBI:18420"/>
    </cofactor>
    <text evidence="1">Binds 2 magnesium ions per tetramer.</text>
</comment>
<comment type="subunit">
    <text evidence="1">Tetramer of two alpha and two beta subunits.</text>
</comment>
<comment type="subcellular location">
    <subcellularLocation>
        <location evidence="1">Cytoplasm</location>
    </subcellularLocation>
</comment>
<comment type="similarity">
    <text evidence="1">Belongs to the class-II aminoacyl-tRNA synthetase family. Phe-tRNA synthetase alpha subunit type 1 subfamily.</text>
</comment>
<comment type="sequence caution" evidence="2">
    <conflict type="erroneous initiation">
        <sequence resource="EMBL-CDS" id="BAC64443"/>
    </conflict>
</comment>
<evidence type="ECO:0000255" key="1">
    <source>
        <dbReference type="HAMAP-Rule" id="MF_00281"/>
    </source>
</evidence>
<evidence type="ECO:0000305" key="2"/>
<sequence length="347" mass="39193">MDLQAQLEELKTKTLETLQSLTGNHTKELQDLRVAVLGKKGSLTELLKGLKDLSNDLRPVVGKQVNEVRDLLTKAFEEQAKIVEAAKIQAQLDAESIDVTLPGRQMTLGHRHVLTQTSEEIEDIFLGMGFQIVDGFEVEKDYYNFERMNLPKDHPARDMQDTFYITEEILLRTHTSPVQARTLDQHDFSKGPLKMVSPGRVFRRDTDDATHSHQFHQIEGLVVGKNISMGDLKGTLEMIIKKMFGEERSIRLRPSYFPFTEPSVEVDVSCFKCGGKGCNVCKKTGWIEILGAGMVHPSVLEMSGVDAKEYSGFAFGLGQERIAMLRYGINDIRGFYQGDQRFSEQFN</sequence>
<dbReference type="EC" id="6.1.1.20" evidence="1"/>
<dbReference type="EMBL" id="BA000034">
    <property type="protein sequence ID" value="BAC64443.1"/>
    <property type="status" value="ALT_INIT"/>
    <property type="molecule type" value="Genomic_DNA"/>
</dbReference>
<dbReference type="RefSeq" id="WP_003057440.1">
    <property type="nucleotide sequence ID" value="NC_004606.1"/>
</dbReference>
<dbReference type="SMR" id="P0DG51"/>
<dbReference type="KEGG" id="sps:SPs1348"/>
<dbReference type="HOGENOM" id="CLU_025086_0_1_9"/>
<dbReference type="GO" id="GO:0005737">
    <property type="term" value="C:cytoplasm"/>
    <property type="evidence" value="ECO:0007669"/>
    <property type="project" value="UniProtKB-SubCell"/>
</dbReference>
<dbReference type="GO" id="GO:0005524">
    <property type="term" value="F:ATP binding"/>
    <property type="evidence" value="ECO:0007669"/>
    <property type="project" value="UniProtKB-UniRule"/>
</dbReference>
<dbReference type="GO" id="GO:0140096">
    <property type="term" value="F:catalytic activity, acting on a protein"/>
    <property type="evidence" value="ECO:0007669"/>
    <property type="project" value="UniProtKB-ARBA"/>
</dbReference>
<dbReference type="GO" id="GO:0000287">
    <property type="term" value="F:magnesium ion binding"/>
    <property type="evidence" value="ECO:0007669"/>
    <property type="project" value="UniProtKB-UniRule"/>
</dbReference>
<dbReference type="GO" id="GO:0004826">
    <property type="term" value="F:phenylalanine-tRNA ligase activity"/>
    <property type="evidence" value="ECO:0007669"/>
    <property type="project" value="UniProtKB-UniRule"/>
</dbReference>
<dbReference type="GO" id="GO:0016740">
    <property type="term" value="F:transferase activity"/>
    <property type="evidence" value="ECO:0007669"/>
    <property type="project" value="UniProtKB-ARBA"/>
</dbReference>
<dbReference type="GO" id="GO:0000049">
    <property type="term" value="F:tRNA binding"/>
    <property type="evidence" value="ECO:0007669"/>
    <property type="project" value="InterPro"/>
</dbReference>
<dbReference type="GO" id="GO:0006432">
    <property type="term" value="P:phenylalanyl-tRNA aminoacylation"/>
    <property type="evidence" value="ECO:0007669"/>
    <property type="project" value="UniProtKB-UniRule"/>
</dbReference>
<dbReference type="CDD" id="cd00496">
    <property type="entry name" value="PheRS_alpha_core"/>
    <property type="match status" value="1"/>
</dbReference>
<dbReference type="FunFam" id="3.30.930.10:FF:000003">
    <property type="entry name" value="Phenylalanine--tRNA ligase alpha subunit"/>
    <property type="match status" value="1"/>
</dbReference>
<dbReference type="Gene3D" id="3.30.930.10">
    <property type="entry name" value="Bira Bifunctional Protein, Domain 2"/>
    <property type="match status" value="1"/>
</dbReference>
<dbReference type="HAMAP" id="MF_00281">
    <property type="entry name" value="Phe_tRNA_synth_alpha1"/>
    <property type="match status" value="1"/>
</dbReference>
<dbReference type="InterPro" id="IPR006195">
    <property type="entry name" value="aa-tRNA-synth_II"/>
</dbReference>
<dbReference type="InterPro" id="IPR045864">
    <property type="entry name" value="aa-tRNA-synth_II/BPL/LPL"/>
</dbReference>
<dbReference type="InterPro" id="IPR004529">
    <property type="entry name" value="Phe-tRNA-synth_IIc_asu"/>
</dbReference>
<dbReference type="InterPro" id="IPR004188">
    <property type="entry name" value="Phe-tRNA_ligase_II_N"/>
</dbReference>
<dbReference type="InterPro" id="IPR022911">
    <property type="entry name" value="Phe_tRNA_ligase_alpha1_bac"/>
</dbReference>
<dbReference type="InterPro" id="IPR002319">
    <property type="entry name" value="Phenylalanyl-tRNA_Synthase"/>
</dbReference>
<dbReference type="InterPro" id="IPR010978">
    <property type="entry name" value="tRNA-bd_arm"/>
</dbReference>
<dbReference type="NCBIfam" id="TIGR00468">
    <property type="entry name" value="pheS"/>
    <property type="match status" value="1"/>
</dbReference>
<dbReference type="PANTHER" id="PTHR11538:SF41">
    <property type="entry name" value="PHENYLALANINE--TRNA LIGASE, MITOCHONDRIAL"/>
    <property type="match status" value="1"/>
</dbReference>
<dbReference type="PANTHER" id="PTHR11538">
    <property type="entry name" value="PHENYLALANYL-TRNA SYNTHETASE"/>
    <property type="match status" value="1"/>
</dbReference>
<dbReference type="Pfam" id="PF02912">
    <property type="entry name" value="Phe_tRNA-synt_N"/>
    <property type="match status" value="1"/>
</dbReference>
<dbReference type="Pfam" id="PF01409">
    <property type="entry name" value="tRNA-synt_2d"/>
    <property type="match status" value="1"/>
</dbReference>
<dbReference type="SUPFAM" id="SSF55681">
    <property type="entry name" value="Class II aaRS and biotin synthetases"/>
    <property type="match status" value="1"/>
</dbReference>
<dbReference type="SUPFAM" id="SSF46589">
    <property type="entry name" value="tRNA-binding arm"/>
    <property type="match status" value="1"/>
</dbReference>
<dbReference type="PROSITE" id="PS50862">
    <property type="entry name" value="AA_TRNA_LIGASE_II"/>
    <property type="match status" value="1"/>
</dbReference>
<feature type="chain" id="PRO_0000411615" description="Phenylalanine--tRNA ligase alpha subunit">
    <location>
        <begin position="1"/>
        <end position="347"/>
    </location>
</feature>
<feature type="binding site" evidence="1">
    <location>
        <position position="261"/>
    </location>
    <ligand>
        <name>Mg(2+)</name>
        <dbReference type="ChEBI" id="CHEBI:18420"/>
        <note>shared with beta subunit</note>
    </ligand>
</feature>
<proteinExistence type="inferred from homology"/>
<keyword id="KW-0030">Aminoacyl-tRNA synthetase</keyword>
<keyword id="KW-0067">ATP-binding</keyword>
<keyword id="KW-0963">Cytoplasm</keyword>
<keyword id="KW-0436">Ligase</keyword>
<keyword id="KW-0460">Magnesium</keyword>
<keyword id="KW-0479">Metal-binding</keyword>
<keyword id="KW-0547">Nucleotide-binding</keyword>
<keyword id="KW-0648">Protein biosynthesis</keyword>
<gene>
    <name evidence="1" type="primary">pheS</name>
    <name type="ordered locus">SPs1348</name>
</gene>
<reference key="1">
    <citation type="journal article" date="2003" name="Genome Res.">
        <title>Genome sequence of an M3 strain of Streptococcus pyogenes reveals a large-scale genomic rearrangement in invasive strains and new insights into phage evolution.</title>
        <authorList>
            <person name="Nakagawa I."/>
            <person name="Kurokawa K."/>
            <person name="Yamashita A."/>
            <person name="Nakata M."/>
            <person name="Tomiyasu Y."/>
            <person name="Okahashi N."/>
            <person name="Kawabata S."/>
            <person name="Yamazaki K."/>
            <person name="Shiba T."/>
            <person name="Yasunaga T."/>
            <person name="Hayashi H."/>
            <person name="Hattori M."/>
            <person name="Hamada S."/>
        </authorList>
    </citation>
    <scope>NUCLEOTIDE SEQUENCE [LARGE SCALE GENOMIC DNA]</scope>
    <source>
        <strain>SSI-1</strain>
    </source>
</reference>
<protein>
    <recommendedName>
        <fullName evidence="1">Phenylalanine--tRNA ligase alpha subunit</fullName>
        <ecNumber evidence="1">6.1.1.20</ecNumber>
    </recommendedName>
    <alternativeName>
        <fullName evidence="1">Phenylalanyl-tRNA synthetase alpha subunit</fullName>
        <shortName evidence="1">PheRS</shortName>
    </alternativeName>
</protein>